<feature type="chain" id="PRO_0000064232" description="Putative glycylpeptide N-tetradecanoyltransferase 2">
    <location>
        <begin position="1"/>
        <end position="430"/>
    </location>
</feature>
<feature type="active site" description="Proton acceptor; via carboxylate" evidence="1">
    <location>
        <position position="430"/>
    </location>
</feature>
<feature type="binding site" evidence="2">
    <location>
        <begin position="47"/>
        <end position="50"/>
    </location>
    <ligand>
        <name>tetradecanoyl-CoA</name>
        <dbReference type="ChEBI" id="CHEBI:57385"/>
    </ligand>
</feature>
<feature type="binding site" evidence="2">
    <location>
        <begin position="181"/>
        <end position="183"/>
    </location>
    <ligand>
        <name>tetradecanoyl-CoA</name>
        <dbReference type="ChEBI" id="CHEBI:57385"/>
    </ligand>
</feature>
<feature type="binding site" evidence="2">
    <location>
        <begin position="189"/>
        <end position="193"/>
    </location>
    <ligand>
        <name>tetradecanoyl-CoA</name>
        <dbReference type="ChEBI" id="CHEBI:57385"/>
    </ligand>
</feature>
<dbReference type="EC" id="2.3.1.97"/>
<dbReference type="EMBL" id="AF250957">
    <property type="protein sequence ID" value="AAK49038.1"/>
    <property type="molecule type" value="mRNA"/>
</dbReference>
<dbReference type="EMBL" id="AC004005">
    <property type="protein sequence ID" value="AAC23421.2"/>
    <property type="status" value="ALT_SEQ"/>
    <property type="molecule type" value="Genomic_DNA"/>
</dbReference>
<dbReference type="EMBL" id="CP002685">
    <property type="status" value="NOT_ANNOTATED_CDS"/>
    <property type="molecule type" value="Genomic_DNA"/>
</dbReference>
<dbReference type="PIR" id="T00697">
    <property type="entry name" value="T00697"/>
</dbReference>
<dbReference type="SMR" id="Q94L32"/>
<dbReference type="FunCoup" id="Q94L32">
    <property type="interactions" value="3315"/>
</dbReference>
<dbReference type="STRING" id="3702.Q94L32"/>
<dbReference type="GlyGen" id="Q94L32">
    <property type="glycosylation" value="1 site"/>
</dbReference>
<dbReference type="PeptideAtlas" id="Q94L32"/>
<dbReference type="Araport" id="AT2G44170"/>
<dbReference type="TAIR" id="AT2G44170"/>
<dbReference type="InParanoid" id="Q94L32"/>
<dbReference type="Proteomes" id="UP000006548">
    <property type="component" value="Chromosome 2"/>
</dbReference>
<dbReference type="ExpressionAtlas" id="Q94L32">
    <property type="expression patterns" value="baseline and differential"/>
</dbReference>
<dbReference type="GO" id="GO:0005829">
    <property type="term" value="C:cytosol"/>
    <property type="evidence" value="ECO:0000318"/>
    <property type="project" value="GO_Central"/>
</dbReference>
<dbReference type="GO" id="GO:0004379">
    <property type="term" value="F:glycylpeptide N-tetradecanoyltransferase activity"/>
    <property type="evidence" value="ECO:0000318"/>
    <property type="project" value="GO_Central"/>
</dbReference>
<dbReference type="GO" id="GO:0072657">
    <property type="term" value="P:protein localization to membrane"/>
    <property type="evidence" value="ECO:0000318"/>
    <property type="project" value="GO_Central"/>
</dbReference>
<dbReference type="Gene3D" id="3.40.630.170">
    <property type="match status" value="1"/>
</dbReference>
<dbReference type="InterPro" id="IPR016181">
    <property type="entry name" value="Acyl_CoA_acyltransferase"/>
</dbReference>
<dbReference type="InterPro" id="IPR000903">
    <property type="entry name" value="NMT"/>
</dbReference>
<dbReference type="InterPro" id="IPR022677">
    <property type="entry name" value="NMT_C"/>
</dbReference>
<dbReference type="InterPro" id="IPR022678">
    <property type="entry name" value="NMT_CS"/>
</dbReference>
<dbReference type="InterPro" id="IPR022676">
    <property type="entry name" value="NMT_N"/>
</dbReference>
<dbReference type="PANTHER" id="PTHR11377:SF17">
    <property type="entry name" value="GLYCYLPEPTIDE N-TETRADECANOYLTRANSFERASE 1-RELATED"/>
    <property type="match status" value="1"/>
</dbReference>
<dbReference type="PANTHER" id="PTHR11377">
    <property type="entry name" value="N-MYRISTOYL TRANSFERASE"/>
    <property type="match status" value="1"/>
</dbReference>
<dbReference type="Pfam" id="PF01233">
    <property type="entry name" value="NMT"/>
    <property type="match status" value="1"/>
</dbReference>
<dbReference type="Pfam" id="PF02799">
    <property type="entry name" value="NMT_C"/>
    <property type="match status" value="1"/>
</dbReference>
<dbReference type="PIRSF" id="PIRSF015892">
    <property type="entry name" value="N-myristl_transf"/>
    <property type="match status" value="1"/>
</dbReference>
<dbReference type="SUPFAM" id="SSF55729">
    <property type="entry name" value="Acyl-CoA N-acyltransferases (Nat)"/>
    <property type="match status" value="2"/>
</dbReference>
<dbReference type="PROSITE" id="PS00975">
    <property type="entry name" value="NMT_1"/>
    <property type="match status" value="1"/>
</dbReference>
<comment type="function">
    <text evidence="1">May add a myristoyl group to the N-terminal glycine residue of certain cellular proteins.</text>
</comment>
<comment type="catalytic activity">
    <reaction>
        <text>N-terminal glycyl-[protein] + tetradecanoyl-CoA = N-tetradecanoylglycyl-[protein] + CoA + H(+)</text>
        <dbReference type="Rhea" id="RHEA:15521"/>
        <dbReference type="Rhea" id="RHEA-COMP:12666"/>
        <dbReference type="Rhea" id="RHEA-COMP:12667"/>
        <dbReference type="ChEBI" id="CHEBI:15378"/>
        <dbReference type="ChEBI" id="CHEBI:57287"/>
        <dbReference type="ChEBI" id="CHEBI:57385"/>
        <dbReference type="ChEBI" id="CHEBI:64723"/>
        <dbReference type="ChEBI" id="CHEBI:133050"/>
        <dbReference type="EC" id="2.3.1.97"/>
    </reaction>
</comment>
<comment type="similarity">
    <text evidence="3">Belongs to the NMT family.</text>
</comment>
<comment type="caution">
    <text evidence="3">Could be the product of a pseudogene.</text>
</comment>
<comment type="sequence caution" evidence="3">
    <conflict type="erroneous gene model prediction">
        <sequence resource="EMBL-CDS" id="AAC23421"/>
    </conflict>
</comment>
<name>NMT2_ARATH</name>
<sequence length="430" mass="49628">MSDPKLKPVEDALVTVAKSSQIQLAKDDTSGGTIVGRLLQCQYSKTHKFWETQPVEQFKDIQDTSLPEGPIEPATLVSEVKQEPYNLLGQFEWTICDMNSDDMCLEMYNFLKENSPDDQQIKYEYSKEYLRWALCPPGYYQSWHIGVRVKTSKKLIAFICGRPTRIRVRDEVVKMAKVNSLCVHKKLRSKGLAPLMIKELTRRVKLQNIWQAAYTSSHILSRPVTTSRDWVRMLNPKKLIDVGLTRLRDRMTMSRTVKLYKLPDAPITPGFREMERRDVPAVTALLRNYLSQFAVATDFDDNDVKHWLLPRENIVYSYVVVSPETHDVTDFCSFCNSSITIPGNRKYTTLECAYACCNVATLTSLSQLVNDALIVSKQKGFDVFYASDVMQNESFLKELRFYPLCRQSHYYLYNYRLRNALKPSELGLIL</sequence>
<reference key="1">
    <citation type="journal article" date="2003" name="J. Biol. Chem.">
        <title>Unexpected protein families including cell defense components feature in the N-myristoylome of a higher eukaryote.</title>
        <authorList>
            <person name="Boisson B."/>
            <person name="Giglione C."/>
            <person name="Meinnel T."/>
        </authorList>
    </citation>
    <scope>NUCLEOTIDE SEQUENCE [MRNA]</scope>
</reference>
<reference key="2">
    <citation type="journal article" date="1999" name="Nature">
        <title>Sequence and analysis of chromosome 2 of the plant Arabidopsis thaliana.</title>
        <authorList>
            <person name="Lin X."/>
            <person name="Kaul S."/>
            <person name="Rounsley S.D."/>
            <person name="Shea T.P."/>
            <person name="Benito M.-I."/>
            <person name="Town C.D."/>
            <person name="Fujii C.Y."/>
            <person name="Mason T.M."/>
            <person name="Bowman C.L."/>
            <person name="Barnstead M.E."/>
            <person name="Feldblyum T.V."/>
            <person name="Buell C.R."/>
            <person name="Ketchum K.A."/>
            <person name="Lee J.J."/>
            <person name="Ronning C.M."/>
            <person name="Koo H.L."/>
            <person name="Moffat K.S."/>
            <person name="Cronin L.A."/>
            <person name="Shen M."/>
            <person name="Pai G."/>
            <person name="Van Aken S."/>
            <person name="Umayam L."/>
            <person name="Tallon L.J."/>
            <person name="Gill J.E."/>
            <person name="Adams M.D."/>
            <person name="Carrera A.J."/>
            <person name="Creasy T.H."/>
            <person name="Goodman H.M."/>
            <person name="Somerville C.R."/>
            <person name="Copenhaver G.P."/>
            <person name="Preuss D."/>
            <person name="Nierman W.C."/>
            <person name="White O."/>
            <person name="Eisen J.A."/>
            <person name="Salzberg S.L."/>
            <person name="Fraser C.M."/>
            <person name="Venter J.C."/>
        </authorList>
    </citation>
    <scope>NUCLEOTIDE SEQUENCE [LARGE SCALE GENOMIC DNA]</scope>
    <source>
        <strain>cv. Columbia</strain>
    </source>
</reference>
<reference key="3">
    <citation type="journal article" date="2017" name="Plant J.">
        <title>Araport11: a complete reannotation of the Arabidopsis thaliana reference genome.</title>
        <authorList>
            <person name="Cheng C.Y."/>
            <person name="Krishnakumar V."/>
            <person name="Chan A.P."/>
            <person name="Thibaud-Nissen F."/>
            <person name="Schobel S."/>
            <person name="Town C.D."/>
        </authorList>
    </citation>
    <scope>GENOME REANNOTATION</scope>
    <source>
        <strain>cv. Columbia</strain>
    </source>
</reference>
<accession>Q94L32</accession>
<accession>O80586</accession>
<protein>
    <recommendedName>
        <fullName>Putative glycylpeptide N-tetradecanoyltransferase 2</fullName>
        <ecNumber>2.3.1.97</ecNumber>
    </recommendedName>
    <alternativeName>
        <fullName>Myristoyl-CoA:protein N-myristoyltransferase 2</fullName>
        <shortName>NMT 2</shortName>
        <shortName>Type I N-myristoyltransferase 2</shortName>
    </alternativeName>
    <alternativeName>
        <fullName>Peptide N-myristoyltransferase 2</fullName>
    </alternativeName>
</protein>
<evidence type="ECO:0000250" key="1"/>
<evidence type="ECO:0000250" key="2">
    <source>
        <dbReference type="UniProtKB" id="P14743"/>
    </source>
</evidence>
<evidence type="ECO:0000305" key="3"/>
<proteinExistence type="uncertain"/>
<organism>
    <name type="scientific">Arabidopsis thaliana</name>
    <name type="common">Mouse-ear cress</name>
    <dbReference type="NCBI Taxonomy" id="3702"/>
    <lineage>
        <taxon>Eukaryota</taxon>
        <taxon>Viridiplantae</taxon>
        <taxon>Streptophyta</taxon>
        <taxon>Embryophyta</taxon>
        <taxon>Tracheophyta</taxon>
        <taxon>Spermatophyta</taxon>
        <taxon>Magnoliopsida</taxon>
        <taxon>eudicotyledons</taxon>
        <taxon>Gunneridae</taxon>
        <taxon>Pentapetalae</taxon>
        <taxon>rosids</taxon>
        <taxon>malvids</taxon>
        <taxon>Brassicales</taxon>
        <taxon>Brassicaceae</taxon>
        <taxon>Camelineae</taxon>
        <taxon>Arabidopsis</taxon>
    </lineage>
</organism>
<gene>
    <name type="primary">NMT2</name>
    <name type="ordered locus">At2g44170</name>
    <name type="ORF">F6E13.30</name>
</gene>
<keyword id="KW-0012">Acyltransferase</keyword>
<keyword id="KW-1185">Reference proteome</keyword>
<keyword id="KW-0808">Transferase</keyword>